<feature type="chain" id="PRO_0000131391" description="Large ribosomal subunit protein uL18">
    <location>
        <begin position="1"/>
        <end position="119"/>
    </location>
</feature>
<reference key="1">
    <citation type="journal article" date="2002" name="Nature">
        <title>Comparison of the genomes of two Xanthomonas pathogens with differing host specificities.</title>
        <authorList>
            <person name="da Silva A.C.R."/>
            <person name="Ferro J.A."/>
            <person name="Reinach F.C."/>
            <person name="Farah C.S."/>
            <person name="Furlan L.R."/>
            <person name="Quaggio R.B."/>
            <person name="Monteiro-Vitorello C.B."/>
            <person name="Van Sluys M.A."/>
            <person name="Almeida N.F. Jr."/>
            <person name="Alves L.M.C."/>
            <person name="do Amaral A.M."/>
            <person name="Bertolini M.C."/>
            <person name="Camargo L.E.A."/>
            <person name="Camarotte G."/>
            <person name="Cannavan F."/>
            <person name="Cardozo J."/>
            <person name="Chambergo F."/>
            <person name="Ciapina L.P."/>
            <person name="Cicarelli R.M.B."/>
            <person name="Coutinho L.L."/>
            <person name="Cursino-Santos J.R."/>
            <person name="El-Dorry H."/>
            <person name="Faria J.B."/>
            <person name="Ferreira A.J.S."/>
            <person name="Ferreira R.C.C."/>
            <person name="Ferro M.I.T."/>
            <person name="Formighieri E.F."/>
            <person name="Franco M.C."/>
            <person name="Greggio C.C."/>
            <person name="Gruber A."/>
            <person name="Katsuyama A.M."/>
            <person name="Kishi L.T."/>
            <person name="Leite R.P."/>
            <person name="Lemos E.G.M."/>
            <person name="Lemos M.V.F."/>
            <person name="Locali E.C."/>
            <person name="Machado M.A."/>
            <person name="Madeira A.M.B.N."/>
            <person name="Martinez-Rossi N.M."/>
            <person name="Martins E.C."/>
            <person name="Meidanis J."/>
            <person name="Menck C.F.M."/>
            <person name="Miyaki C.Y."/>
            <person name="Moon D.H."/>
            <person name="Moreira L.M."/>
            <person name="Novo M.T.M."/>
            <person name="Okura V.K."/>
            <person name="Oliveira M.C."/>
            <person name="Oliveira V.R."/>
            <person name="Pereira H.A."/>
            <person name="Rossi A."/>
            <person name="Sena J.A.D."/>
            <person name="Silva C."/>
            <person name="de Souza R.F."/>
            <person name="Spinola L.A.F."/>
            <person name="Takita M.A."/>
            <person name="Tamura R.E."/>
            <person name="Teixeira E.C."/>
            <person name="Tezza R.I.D."/>
            <person name="Trindade dos Santos M."/>
            <person name="Truffi D."/>
            <person name="Tsai S.M."/>
            <person name="White F.F."/>
            <person name="Setubal J.C."/>
            <person name="Kitajima J.P."/>
        </authorList>
    </citation>
    <scope>NUCLEOTIDE SEQUENCE [LARGE SCALE GENOMIC DNA]</scope>
    <source>
        <strain>ATCC 33913 / DSM 3586 / NCPPB 528 / LMG 568 / P 25</strain>
    </source>
</reference>
<proteinExistence type="inferred from homology"/>
<keyword id="KW-1185">Reference proteome</keyword>
<keyword id="KW-0687">Ribonucleoprotein</keyword>
<keyword id="KW-0689">Ribosomal protein</keyword>
<keyword id="KW-0694">RNA-binding</keyword>
<keyword id="KW-0699">rRNA-binding</keyword>
<sequence>MSINKNIARLRRAKSTRAHIRELGVARLSVLRTGQHLYAQVFTADGSKVIAAANTLQADVKDGLKNGKNSDAAVKVGKLIAERAKAAGIEKVAFDRSGYRYHGRIKALADAAREGGLQF</sequence>
<protein>
    <recommendedName>
        <fullName evidence="1">Large ribosomal subunit protein uL18</fullName>
    </recommendedName>
    <alternativeName>
        <fullName evidence="2">50S ribosomal protein L18</fullName>
    </alternativeName>
</protein>
<comment type="function">
    <text evidence="1">This is one of the proteins that bind and probably mediate the attachment of the 5S RNA into the large ribosomal subunit, where it forms part of the central protuberance.</text>
</comment>
<comment type="subunit">
    <text evidence="1">Part of the 50S ribosomal subunit; part of the 5S rRNA/L5/L18/L25 subcomplex. Contacts the 5S and 23S rRNAs.</text>
</comment>
<comment type="similarity">
    <text evidence="1">Belongs to the universal ribosomal protein uL18 family.</text>
</comment>
<accession>Q8PC36</accession>
<gene>
    <name evidence="1" type="primary">rplR</name>
    <name type="ordered locus">XCC0911</name>
</gene>
<evidence type="ECO:0000255" key="1">
    <source>
        <dbReference type="HAMAP-Rule" id="MF_01337"/>
    </source>
</evidence>
<evidence type="ECO:0000305" key="2"/>
<organism>
    <name type="scientific">Xanthomonas campestris pv. campestris (strain ATCC 33913 / DSM 3586 / NCPPB 528 / LMG 568 / P 25)</name>
    <dbReference type="NCBI Taxonomy" id="190485"/>
    <lineage>
        <taxon>Bacteria</taxon>
        <taxon>Pseudomonadati</taxon>
        <taxon>Pseudomonadota</taxon>
        <taxon>Gammaproteobacteria</taxon>
        <taxon>Lysobacterales</taxon>
        <taxon>Lysobacteraceae</taxon>
        <taxon>Xanthomonas</taxon>
    </lineage>
</organism>
<dbReference type="EMBL" id="AE008922">
    <property type="protein sequence ID" value="AAM40221.1"/>
    <property type="molecule type" value="Genomic_DNA"/>
</dbReference>
<dbReference type="RefSeq" id="NP_636297.1">
    <property type="nucleotide sequence ID" value="NC_003902.1"/>
</dbReference>
<dbReference type="RefSeq" id="WP_005993383.1">
    <property type="nucleotide sequence ID" value="NC_003902.1"/>
</dbReference>
<dbReference type="SMR" id="Q8PC36"/>
<dbReference type="STRING" id="190485.XCC0911"/>
<dbReference type="EnsemblBacteria" id="AAM40221">
    <property type="protein sequence ID" value="AAM40221"/>
    <property type="gene ID" value="XCC0911"/>
</dbReference>
<dbReference type="GeneID" id="93986271"/>
<dbReference type="KEGG" id="xcc:XCC0911"/>
<dbReference type="PATRIC" id="fig|190485.4.peg.983"/>
<dbReference type="eggNOG" id="COG0256">
    <property type="taxonomic scope" value="Bacteria"/>
</dbReference>
<dbReference type="HOGENOM" id="CLU_098841_0_1_6"/>
<dbReference type="OrthoDB" id="9810939at2"/>
<dbReference type="Proteomes" id="UP000001010">
    <property type="component" value="Chromosome"/>
</dbReference>
<dbReference type="GO" id="GO:0022625">
    <property type="term" value="C:cytosolic large ribosomal subunit"/>
    <property type="evidence" value="ECO:0000318"/>
    <property type="project" value="GO_Central"/>
</dbReference>
<dbReference type="GO" id="GO:0008097">
    <property type="term" value="F:5S rRNA binding"/>
    <property type="evidence" value="ECO:0000318"/>
    <property type="project" value="GO_Central"/>
</dbReference>
<dbReference type="GO" id="GO:0003735">
    <property type="term" value="F:structural constituent of ribosome"/>
    <property type="evidence" value="ECO:0007669"/>
    <property type="project" value="InterPro"/>
</dbReference>
<dbReference type="GO" id="GO:0006412">
    <property type="term" value="P:translation"/>
    <property type="evidence" value="ECO:0007669"/>
    <property type="project" value="UniProtKB-UniRule"/>
</dbReference>
<dbReference type="CDD" id="cd00432">
    <property type="entry name" value="Ribosomal_L18_L5e"/>
    <property type="match status" value="1"/>
</dbReference>
<dbReference type="FunFam" id="3.30.420.100:FF:000001">
    <property type="entry name" value="50S ribosomal protein L18"/>
    <property type="match status" value="1"/>
</dbReference>
<dbReference type="Gene3D" id="3.30.420.100">
    <property type="match status" value="1"/>
</dbReference>
<dbReference type="HAMAP" id="MF_01337_B">
    <property type="entry name" value="Ribosomal_uL18_B"/>
    <property type="match status" value="1"/>
</dbReference>
<dbReference type="InterPro" id="IPR004389">
    <property type="entry name" value="Ribosomal_uL18_bac-type"/>
</dbReference>
<dbReference type="InterPro" id="IPR005484">
    <property type="entry name" value="Ribosomal_uL18_bac/euk"/>
</dbReference>
<dbReference type="NCBIfam" id="TIGR00060">
    <property type="entry name" value="L18_bact"/>
    <property type="match status" value="1"/>
</dbReference>
<dbReference type="PANTHER" id="PTHR12899">
    <property type="entry name" value="39S RIBOSOMAL PROTEIN L18, MITOCHONDRIAL"/>
    <property type="match status" value="1"/>
</dbReference>
<dbReference type="PANTHER" id="PTHR12899:SF3">
    <property type="entry name" value="LARGE RIBOSOMAL SUBUNIT PROTEIN UL18M"/>
    <property type="match status" value="1"/>
</dbReference>
<dbReference type="Pfam" id="PF00861">
    <property type="entry name" value="Ribosomal_L18p"/>
    <property type="match status" value="1"/>
</dbReference>
<dbReference type="SUPFAM" id="SSF53137">
    <property type="entry name" value="Translational machinery components"/>
    <property type="match status" value="1"/>
</dbReference>
<name>RL18_XANCP</name>